<gene>
    <name evidence="1" type="primary">leuC</name>
    <name type="ordered locus">PXO_02613</name>
</gene>
<organism>
    <name type="scientific">Xanthomonas oryzae pv. oryzae (strain PXO99A)</name>
    <dbReference type="NCBI Taxonomy" id="360094"/>
    <lineage>
        <taxon>Bacteria</taxon>
        <taxon>Pseudomonadati</taxon>
        <taxon>Pseudomonadota</taxon>
        <taxon>Gammaproteobacteria</taxon>
        <taxon>Lysobacterales</taxon>
        <taxon>Lysobacteraceae</taxon>
        <taxon>Xanthomonas</taxon>
    </lineage>
</organism>
<dbReference type="EC" id="4.2.1.33" evidence="1"/>
<dbReference type="EMBL" id="CP000967">
    <property type="protein sequence ID" value="ACD60896.1"/>
    <property type="molecule type" value="Genomic_DNA"/>
</dbReference>
<dbReference type="RefSeq" id="WP_011257806.1">
    <property type="nucleotide sequence ID" value="NC_010717.2"/>
</dbReference>
<dbReference type="SMR" id="B2SNH4"/>
<dbReference type="KEGG" id="xop:PXO_02613"/>
<dbReference type="eggNOG" id="COG0065">
    <property type="taxonomic scope" value="Bacteria"/>
</dbReference>
<dbReference type="HOGENOM" id="CLU_006714_3_4_6"/>
<dbReference type="UniPathway" id="UPA00048">
    <property type="reaction ID" value="UER00071"/>
</dbReference>
<dbReference type="PHI-base" id="PHI:9981"/>
<dbReference type="Proteomes" id="UP000001740">
    <property type="component" value="Chromosome"/>
</dbReference>
<dbReference type="GO" id="GO:0003861">
    <property type="term" value="F:3-isopropylmalate dehydratase activity"/>
    <property type="evidence" value="ECO:0007669"/>
    <property type="project" value="UniProtKB-UniRule"/>
</dbReference>
<dbReference type="GO" id="GO:0051539">
    <property type="term" value="F:4 iron, 4 sulfur cluster binding"/>
    <property type="evidence" value="ECO:0007669"/>
    <property type="project" value="UniProtKB-KW"/>
</dbReference>
<dbReference type="GO" id="GO:0046872">
    <property type="term" value="F:metal ion binding"/>
    <property type="evidence" value="ECO:0007669"/>
    <property type="project" value="UniProtKB-KW"/>
</dbReference>
<dbReference type="GO" id="GO:0009098">
    <property type="term" value="P:L-leucine biosynthetic process"/>
    <property type="evidence" value="ECO:0007669"/>
    <property type="project" value="UniProtKB-UniRule"/>
</dbReference>
<dbReference type="CDD" id="cd01583">
    <property type="entry name" value="IPMI"/>
    <property type="match status" value="1"/>
</dbReference>
<dbReference type="FunFam" id="3.30.499.10:FF:000007">
    <property type="entry name" value="3-isopropylmalate dehydratase large subunit"/>
    <property type="match status" value="1"/>
</dbReference>
<dbReference type="Gene3D" id="3.30.499.10">
    <property type="entry name" value="Aconitase, domain 3"/>
    <property type="match status" value="2"/>
</dbReference>
<dbReference type="HAMAP" id="MF_01026">
    <property type="entry name" value="LeuC_type1"/>
    <property type="match status" value="1"/>
</dbReference>
<dbReference type="InterPro" id="IPR004430">
    <property type="entry name" value="3-IsopropMal_deHydase_lsu"/>
</dbReference>
<dbReference type="InterPro" id="IPR015931">
    <property type="entry name" value="Acnase/IPM_dHydase_lsu_aba_1/3"/>
</dbReference>
<dbReference type="InterPro" id="IPR001030">
    <property type="entry name" value="Acoase/IPM_deHydtase_lsu_aba"/>
</dbReference>
<dbReference type="InterPro" id="IPR018136">
    <property type="entry name" value="Aconitase_4Fe-4S_BS"/>
</dbReference>
<dbReference type="InterPro" id="IPR036008">
    <property type="entry name" value="Aconitase_4Fe-4S_dom"/>
</dbReference>
<dbReference type="InterPro" id="IPR050067">
    <property type="entry name" value="IPM_dehydratase_rel_enz"/>
</dbReference>
<dbReference type="InterPro" id="IPR033941">
    <property type="entry name" value="IPMI_cat"/>
</dbReference>
<dbReference type="NCBIfam" id="TIGR00170">
    <property type="entry name" value="leuC"/>
    <property type="match status" value="1"/>
</dbReference>
<dbReference type="NCBIfam" id="NF004016">
    <property type="entry name" value="PRK05478.1"/>
    <property type="match status" value="1"/>
</dbReference>
<dbReference type="NCBIfam" id="NF009116">
    <property type="entry name" value="PRK12466.1"/>
    <property type="match status" value="1"/>
</dbReference>
<dbReference type="PANTHER" id="PTHR43822:SF9">
    <property type="entry name" value="3-ISOPROPYLMALATE DEHYDRATASE"/>
    <property type="match status" value="1"/>
</dbReference>
<dbReference type="PANTHER" id="PTHR43822">
    <property type="entry name" value="HOMOACONITASE, MITOCHONDRIAL-RELATED"/>
    <property type="match status" value="1"/>
</dbReference>
<dbReference type="Pfam" id="PF00330">
    <property type="entry name" value="Aconitase"/>
    <property type="match status" value="1"/>
</dbReference>
<dbReference type="PRINTS" id="PR00415">
    <property type="entry name" value="ACONITASE"/>
</dbReference>
<dbReference type="SUPFAM" id="SSF53732">
    <property type="entry name" value="Aconitase iron-sulfur domain"/>
    <property type="match status" value="1"/>
</dbReference>
<dbReference type="PROSITE" id="PS00450">
    <property type="entry name" value="ACONITASE_1"/>
    <property type="match status" value="1"/>
</dbReference>
<dbReference type="PROSITE" id="PS01244">
    <property type="entry name" value="ACONITASE_2"/>
    <property type="match status" value="1"/>
</dbReference>
<protein>
    <recommendedName>
        <fullName evidence="1">3-isopropylmalate dehydratase large subunit</fullName>
        <ecNumber evidence="1">4.2.1.33</ecNumber>
    </recommendedName>
    <alternativeName>
        <fullName evidence="1">Alpha-IPM isomerase</fullName>
        <shortName evidence="1">IPMI</shortName>
    </alternativeName>
    <alternativeName>
        <fullName evidence="1">Isopropylmalate isomerase</fullName>
    </alternativeName>
</protein>
<feature type="chain" id="PRO_1000135720" description="3-isopropylmalate dehydratase large subunit">
    <location>
        <begin position="1"/>
        <end position="482"/>
    </location>
</feature>
<feature type="binding site" evidence="1">
    <location>
        <position position="353"/>
    </location>
    <ligand>
        <name>[4Fe-4S] cluster</name>
        <dbReference type="ChEBI" id="CHEBI:49883"/>
    </ligand>
</feature>
<feature type="binding site" evidence="1">
    <location>
        <position position="414"/>
    </location>
    <ligand>
        <name>[4Fe-4S] cluster</name>
        <dbReference type="ChEBI" id="CHEBI:49883"/>
    </ligand>
</feature>
<feature type="binding site" evidence="1">
    <location>
        <position position="417"/>
    </location>
    <ligand>
        <name>[4Fe-4S] cluster</name>
        <dbReference type="ChEBI" id="CHEBI:49883"/>
    </ligand>
</feature>
<reference key="1">
    <citation type="journal article" date="2008" name="BMC Genomics">
        <title>Genome sequence and rapid evolution of the rice pathogen Xanthomonas oryzae pv. oryzae PXO99A.</title>
        <authorList>
            <person name="Salzberg S.L."/>
            <person name="Sommer D.D."/>
            <person name="Schatz M.C."/>
            <person name="Phillippy A.M."/>
            <person name="Rabinowicz P.D."/>
            <person name="Tsuge S."/>
            <person name="Furutani A."/>
            <person name="Ochiai H."/>
            <person name="Delcher A.L."/>
            <person name="Kelley D."/>
            <person name="Madupu R."/>
            <person name="Puiu D."/>
            <person name="Radune D."/>
            <person name="Shumway M."/>
            <person name="Trapnell C."/>
            <person name="Aparna G."/>
            <person name="Jha G."/>
            <person name="Pandey A."/>
            <person name="Patil P.B."/>
            <person name="Ishihara H."/>
            <person name="Meyer D.F."/>
            <person name="Szurek B."/>
            <person name="Verdier V."/>
            <person name="Koebnik R."/>
            <person name="Dow J.M."/>
            <person name="Ryan R.P."/>
            <person name="Hirata H."/>
            <person name="Tsuyumu S."/>
            <person name="Won Lee S."/>
            <person name="Seo Y.-S."/>
            <person name="Sriariyanum M."/>
            <person name="Ronald P.C."/>
            <person name="Sonti R.V."/>
            <person name="Van Sluys M.-A."/>
            <person name="Leach J.E."/>
            <person name="White F.F."/>
            <person name="Bogdanove A.J."/>
        </authorList>
    </citation>
    <scope>NUCLEOTIDE SEQUENCE [LARGE SCALE GENOMIC DNA]</scope>
    <source>
        <strain>PXO99A</strain>
    </source>
</reference>
<comment type="function">
    <text evidence="1">Catalyzes the isomerization between 2-isopropylmalate and 3-isopropylmalate, via the formation of 2-isopropylmaleate.</text>
</comment>
<comment type="catalytic activity">
    <reaction evidence="1">
        <text>(2R,3S)-3-isopropylmalate = (2S)-2-isopropylmalate</text>
        <dbReference type="Rhea" id="RHEA:32287"/>
        <dbReference type="ChEBI" id="CHEBI:1178"/>
        <dbReference type="ChEBI" id="CHEBI:35121"/>
        <dbReference type="EC" id="4.2.1.33"/>
    </reaction>
</comment>
<comment type="cofactor">
    <cofactor evidence="1">
        <name>[4Fe-4S] cluster</name>
        <dbReference type="ChEBI" id="CHEBI:49883"/>
    </cofactor>
    <text evidence="1">Binds 1 [4Fe-4S] cluster per subunit.</text>
</comment>
<comment type="pathway">
    <text evidence="1">Amino-acid biosynthesis; L-leucine biosynthesis; L-leucine from 3-methyl-2-oxobutanoate: step 2/4.</text>
</comment>
<comment type="subunit">
    <text evidence="1">Heterodimer of LeuC and LeuD.</text>
</comment>
<comment type="similarity">
    <text evidence="1">Belongs to the aconitase/IPM isomerase family. LeuC type 1 subfamily.</text>
</comment>
<keyword id="KW-0004">4Fe-4S</keyword>
<keyword id="KW-0028">Amino-acid biosynthesis</keyword>
<keyword id="KW-0100">Branched-chain amino acid biosynthesis</keyword>
<keyword id="KW-0408">Iron</keyword>
<keyword id="KW-0411">Iron-sulfur</keyword>
<keyword id="KW-0432">Leucine biosynthesis</keyword>
<keyword id="KW-0456">Lyase</keyword>
<keyword id="KW-0479">Metal-binding</keyword>
<name>LEUC_XANOP</name>
<accession>B2SNH4</accession>
<proteinExistence type="inferred from homology"/>
<evidence type="ECO:0000255" key="1">
    <source>
        <dbReference type="HAMAP-Rule" id="MF_01026"/>
    </source>
</evidence>
<sequence length="482" mass="51560">MTAKTLYDKLWEMHEVTRRDDGSSLIYIDRHILHEVTSPQAFEGLRLAGRNPWRIDANIATPDHNVPTTRAERQGGLESISDEVSRLQVQTLDENCDDFGILEFKMNDARQGIVHVVGPEQGATLPGMTVVCGDSHTSTHGAFGALAHGIGTSEVEHVLATQCLITKKMKNLQVRVEGTLPFGVTAKDIVLAVIGKIGTAGGNGHALEFAGSAIRALSMEGRMTICNMSIEAGARVGMVAVDEKTIAYVKGRPFAPKGADWDAAVALWSTLVSDPDAHFDTVVELHAEDIKPQVSWGTSPEMVLAIDQHVPDPATEQDPTKRNSIERALKYMGLKANQAITDIRLDRVFIGSCTNSRIEDLRAAAAVAKGRKVASTIKQALVVPGSGLVKAQAEAEGLDKVFLDAGFEWREPGCSMCLAMNPDKLGSGEHCASTSNRNFEGRQGAGGRTHLVSPAMAAAAAVSGHFVDVRELGDSGVGIRDS</sequence>